<comment type="subunit">
    <text evidence="1">Forms oligomers.</text>
</comment>
<comment type="subcellular location">
    <subcellularLocation>
        <location evidence="1">Cytoplasm</location>
        <location evidence="1">Nucleoid</location>
    </subcellularLocation>
</comment>
<comment type="similarity">
    <text evidence="1">Belongs to the MraZ family.</text>
</comment>
<organism>
    <name type="scientific">Finegoldia magna (strain ATCC 29328 / DSM 20472 / WAL 2508)</name>
    <name type="common">Peptostreptococcus magnus</name>
    <dbReference type="NCBI Taxonomy" id="334413"/>
    <lineage>
        <taxon>Bacteria</taxon>
        <taxon>Bacillati</taxon>
        <taxon>Bacillota</taxon>
        <taxon>Tissierellia</taxon>
        <taxon>Tissierellales</taxon>
        <taxon>Peptoniphilaceae</taxon>
        <taxon>Finegoldia</taxon>
    </lineage>
</organism>
<accession>B0S0Y8</accession>
<reference key="1">
    <citation type="journal article" date="2008" name="DNA Res.">
        <title>Complete genome sequence of Finegoldia magna, an anaerobic opportunistic pathogen.</title>
        <authorList>
            <person name="Goto T."/>
            <person name="Yamashita A."/>
            <person name="Hirakawa H."/>
            <person name="Matsutani M."/>
            <person name="Todo K."/>
            <person name="Ohshima K."/>
            <person name="Toh H."/>
            <person name="Miyamoto K."/>
            <person name="Kuhara S."/>
            <person name="Hattori M."/>
            <person name="Shimizu T."/>
            <person name="Akimoto S."/>
        </authorList>
    </citation>
    <scope>NUCLEOTIDE SEQUENCE [LARGE SCALE GENOMIC DNA]</scope>
    <source>
        <strain>ATCC 29328 / DSM 20472 / WAL 2508</strain>
    </source>
</reference>
<proteinExistence type="inferred from homology"/>
<feature type="chain" id="PRO_1000134799" description="Transcriptional regulator MraZ">
    <location>
        <begin position="1"/>
        <end position="143"/>
    </location>
</feature>
<feature type="domain" description="SpoVT-AbrB 1" evidence="2">
    <location>
        <begin position="5"/>
        <end position="47"/>
    </location>
</feature>
<feature type="domain" description="SpoVT-AbrB 2" evidence="2">
    <location>
        <begin position="76"/>
        <end position="119"/>
    </location>
</feature>
<sequence length="143" mass="16711">MFINEYFHNIDSKGRVIMPSKFRDEIGEEFYITKGMDECLFVYPVSAFIQMTEKLNKLSLTRRQARAFSRVFFSGASNQEIDKQGRFLIPQSLRSYADIKKEVAIIGVSNRIEIWDKEKWEQYSNDSSLNYDDLADGLNDLDL</sequence>
<keyword id="KW-0963">Cytoplasm</keyword>
<keyword id="KW-0238">DNA-binding</keyword>
<keyword id="KW-1185">Reference proteome</keyword>
<keyword id="KW-0677">Repeat</keyword>
<keyword id="KW-0804">Transcription</keyword>
<keyword id="KW-0805">Transcription regulation</keyword>
<name>MRAZ_FINM2</name>
<protein>
    <recommendedName>
        <fullName>Transcriptional regulator MraZ</fullName>
    </recommendedName>
</protein>
<evidence type="ECO:0000255" key="1">
    <source>
        <dbReference type="HAMAP-Rule" id="MF_01008"/>
    </source>
</evidence>
<evidence type="ECO:0000255" key="2">
    <source>
        <dbReference type="PROSITE-ProRule" id="PRU01076"/>
    </source>
</evidence>
<gene>
    <name evidence="1" type="primary">mraZ</name>
    <name type="ordered locus">FMG_0610</name>
</gene>
<dbReference type="EMBL" id="AP008971">
    <property type="protein sequence ID" value="BAG08028.1"/>
    <property type="molecule type" value="Genomic_DNA"/>
</dbReference>
<dbReference type="RefSeq" id="WP_012290515.1">
    <property type="nucleotide sequence ID" value="NC_010376.1"/>
</dbReference>
<dbReference type="SMR" id="B0S0Y8"/>
<dbReference type="STRING" id="334413.FMG_0610"/>
<dbReference type="KEGG" id="fma:FMG_0610"/>
<dbReference type="eggNOG" id="COG2001">
    <property type="taxonomic scope" value="Bacteria"/>
</dbReference>
<dbReference type="HOGENOM" id="CLU_107907_0_5_9"/>
<dbReference type="Proteomes" id="UP000001319">
    <property type="component" value="Chromosome"/>
</dbReference>
<dbReference type="GO" id="GO:0005737">
    <property type="term" value="C:cytoplasm"/>
    <property type="evidence" value="ECO:0007669"/>
    <property type="project" value="UniProtKB-UniRule"/>
</dbReference>
<dbReference type="GO" id="GO:0009295">
    <property type="term" value="C:nucleoid"/>
    <property type="evidence" value="ECO:0007669"/>
    <property type="project" value="UniProtKB-SubCell"/>
</dbReference>
<dbReference type="GO" id="GO:0003700">
    <property type="term" value="F:DNA-binding transcription factor activity"/>
    <property type="evidence" value="ECO:0007669"/>
    <property type="project" value="UniProtKB-UniRule"/>
</dbReference>
<dbReference type="GO" id="GO:0000976">
    <property type="term" value="F:transcription cis-regulatory region binding"/>
    <property type="evidence" value="ECO:0007669"/>
    <property type="project" value="TreeGrafter"/>
</dbReference>
<dbReference type="GO" id="GO:2000143">
    <property type="term" value="P:negative regulation of DNA-templated transcription initiation"/>
    <property type="evidence" value="ECO:0007669"/>
    <property type="project" value="TreeGrafter"/>
</dbReference>
<dbReference type="CDD" id="cd16321">
    <property type="entry name" value="MraZ_C"/>
    <property type="match status" value="1"/>
</dbReference>
<dbReference type="CDD" id="cd16320">
    <property type="entry name" value="MraZ_N"/>
    <property type="match status" value="1"/>
</dbReference>
<dbReference type="FunFam" id="3.40.1550.20:FF:000002">
    <property type="entry name" value="Transcriptional regulator MraZ"/>
    <property type="match status" value="1"/>
</dbReference>
<dbReference type="Gene3D" id="3.40.1550.20">
    <property type="entry name" value="Transcriptional regulator MraZ domain"/>
    <property type="match status" value="1"/>
</dbReference>
<dbReference type="HAMAP" id="MF_01008">
    <property type="entry name" value="MraZ"/>
    <property type="match status" value="1"/>
</dbReference>
<dbReference type="InterPro" id="IPR003444">
    <property type="entry name" value="MraZ"/>
</dbReference>
<dbReference type="InterPro" id="IPR035644">
    <property type="entry name" value="MraZ_C"/>
</dbReference>
<dbReference type="InterPro" id="IPR020603">
    <property type="entry name" value="MraZ_dom"/>
</dbReference>
<dbReference type="InterPro" id="IPR035642">
    <property type="entry name" value="MraZ_N"/>
</dbReference>
<dbReference type="InterPro" id="IPR038619">
    <property type="entry name" value="MraZ_sf"/>
</dbReference>
<dbReference type="InterPro" id="IPR007159">
    <property type="entry name" value="SpoVT-AbrB_dom"/>
</dbReference>
<dbReference type="InterPro" id="IPR037914">
    <property type="entry name" value="SpoVT-AbrB_sf"/>
</dbReference>
<dbReference type="NCBIfam" id="TIGR00242">
    <property type="entry name" value="division/cell wall cluster transcriptional repressor MraZ"/>
    <property type="match status" value="1"/>
</dbReference>
<dbReference type="PANTHER" id="PTHR34701">
    <property type="entry name" value="TRANSCRIPTIONAL REGULATOR MRAZ"/>
    <property type="match status" value="1"/>
</dbReference>
<dbReference type="PANTHER" id="PTHR34701:SF1">
    <property type="entry name" value="TRANSCRIPTIONAL REGULATOR MRAZ"/>
    <property type="match status" value="1"/>
</dbReference>
<dbReference type="Pfam" id="PF02381">
    <property type="entry name" value="MraZ"/>
    <property type="match status" value="2"/>
</dbReference>
<dbReference type="SUPFAM" id="SSF89447">
    <property type="entry name" value="AbrB/MazE/MraZ-like"/>
    <property type="match status" value="1"/>
</dbReference>
<dbReference type="PROSITE" id="PS51740">
    <property type="entry name" value="SPOVT_ABRB"/>
    <property type="match status" value="2"/>
</dbReference>